<dbReference type="EC" id="3.6.5.n1" evidence="1"/>
<dbReference type="EMBL" id="CP001158">
    <property type="protein sequence ID" value="ACL30072.1"/>
    <property type="molecule type" value="Genomic_DNA"/>
</dbReference>
<dbReference type="SMR" id="B8D7F7"/>
<dbReference type="KEGG" id="bau:BUAPTUC7_257"/>
<dbReference type="HOGENOM" id="CLU_009995_3_3_6"/>
<dbReference type="GO" id="GO:0005886">
    <property type="term" value="C:plasma membrane"/>
    <property type="evidence" value="ECO:0007669"/>
    <property type="project" value="UniProtKB-SubCell"/>
</dbReference>
<dbReference type="GO" id="GO:0005525">
    <property type="term" value="F:GTP binding"/>
    <property type="evidence" value="ECO:0007669"/>
    <property type="project" value="UniProtKB-UniRule"/>
</dbReference>
<dbReference type="GO" id="GO:0003924">
    <property type="term" value="F:GTPase activity"/>
    <property type="evidence" value="ECO:0007669"/>
    <property type="project" value="UniProtKB-UniRule"/>
</dbReference>
<dbReference type="GO" id="GO:0097216">
    <property type="term" value="F:guanosine tetraphosphate binding"/>
    <property type="evidence" value="ECO:0007669"/>
    <property type="project" value="UniProtKB-ARBA"/>
</dbReference>
<dbReference type="GO" id="GO:0043022">
    <property type="term" value="F:ribosome binding"/>
    <property type="evidence" value="ECO:0007669"/>
    <property type="project" value="UniProtKB-UniRule"/>
</dbReference>
<dbReference type="GO" id="GO:0003746">
    <property type="term" value="F:translation elongation factor activity"/>
    <property type="evidence" value="ECO:0007669"/>
    <property type="project" value="UniProtKB-UniRule"/>
</dbReference>
<dbReference type="GO" id="GO:0045727">
    <property type="term" value="P:positive regulation of translation"/>
    <property type="evidence" value="ECO:0007669"/>
    <property type="project" value="UniProtKB-UniRule"/>
</dbReference>
<dbReference type="CDD" id="cd03699">
    <property type="entry name" value="EF4_II"/>
    <property type="match status" value="1"/>
</dbReference>
<dbReference type="CDD" id="cd16260">
    <property type="entry name" value="EF4_III"/>
    <property type="match status" value="1"/>
</dbReference>
<dbReference type="CDD" id="cd01890">
    <property type="entry name" value="LepA"/>
    <property type="match status" value="1"/>
</dbReference>
<dbReference type="CDD" id="cd03709">
    <property type="entry name" value="lepA_C"/>
    <property type="match status" value="1"/>
</dbReference>
<dbReference type="FunFam" id="3.40.50.300:FF:000078">
    <property type="entry name" value="Elongation factor 4"/>
    <property type="match status" value="1"/>
</dbReference>
<dbReference type="FunFam" id="2.40.30.10:FF:000015">
    <property type="entry name" value="Translation factor GUF1, mitochondrial"/>
    <property type="match status" value="1"/>
</dbReference>
<dbReference type="FunFam" id="3.30.70.240:FF:000007">
    <property type="entry name" value="Translation factor GUF1, mitochondrial"/>
    <property type="match status" value="1"/>
</dbReference>
<dbReference type="FunFam" id="3.30.70.2570:FF:000001">
    <property type="entry name" value="Translation factor GUF1, mitochondrial"/>
    <property type="match status" value="1"/>
</dbReference>
<dbReference type="FunFam" id="3.30.70.870:FF:000004">
    <property type="entry name" value="Translation factor GUF1, mitochondrial"/>
    <property type="match status" value="1"/>
</dbReference>
<dbReference type="Gene3D" id="3.30.70.240">
    <property type="match status" value="1"/>
</dbReference>
<dbReference type="Gene3D" id="3.30.70.2570">
    <property type="entry name" value="Elongation factor 4, C-terminal domain"/>
    <property type="match status" value="1"/>
</dbReference>
<dbReference type="Gene3D" id="3.30.70.870">
    <property type="entry name" value="Elongation Factor G (Translational Gtpase), domain 3"/>
    <property type="match status" value="1"/>
</dbReference>
<dbReference type="Gene3D" id="3.40.50.300">
    <property type="entry name" value="P-loop containing nucleotide triphosphate hydrolases"/>
    <property type="match status" value="1"/>
</dbReference>
<dbReference type="Gene3D" id="2.40.30.10">
    <property type="entry name" value="Translation factors"/>
    <property type="match status" value="1"/>
</dbReference>
<dbReference type="HAMAP" id="MF_00071">
    <property type="entry name" value="LepA"/>
    <property type="match status" value="1"/>
</dbReference>
<dbReference type="InterPro" id="IPR006297">
    <property type="entry name" value="EF-4"/>
</dbReference>
<dbReference type="InterPro" id="IPR035647">
    <property type="entry name" value="EFG_III/V"/>
</dbReference>
<dbReference type="InterPro" id="IPR000640">
    <property type="entry name" value="EFG_V-like"/>
</dbReference>
<dbReference type="InterPro" id="IPR004161">
    <property type="entry name" value="EFTu-like_2"/>
</dbReference>
<dbReference type="InterPro" id="IPR031157">
    <property type="entry name" value="G_TR_CS"/>
</dbReference>
<dbReference type="InterPro" id="IPR038363">
    <property type="entry name" value="LepA_C_sf"/>
</dbReference>
<dbReference type="InterPro" id="IPR013842">
    <property type="entry name" value="LepA_CTD"/>
</dbReference>
<dbReference type="InterPro" id="IPR035654">
    <property type="entry name" value="LepA_IV"/>
</dbReference>
<dbReference type="InterPro" id="IPR027417">
    <property type="entry name" value="P-loop_NTPase"/>
</dbReference>
<dbReference type="InterPro" id="IPR005225">
    <property type="entry name" value="Small_GTP-bd"/>
</dbReference>
<dbReference type="InterPro" id="IPR000795">
    <property type="entry name" value="T_Tr_GTP-bd_dom"/>
</dbReference>
<dbReference type="NCBIfam" id="TIGR01393">
    <property type="entry name" value="lepA"/>
    <property type="match status" value="1"/>
</dbReference>
<dbReference type="NCBIfam" id="TIGR00231">
    <property type="entry name" value="small_GTP"/>
    <property type="match status" value="1"/>
</dbReference>
<dbReference type="PANTHER" id="PTHR43512:SF4">
    <property type="entry name" value="TRANSLATION FACTOR GUF1 HOMOLOG, CHLOROPLASTIC"/>
    <property type="match status" value="1"/>
</dbReference>
<dbReference type="PANTHER" id="PTHR43512">
    <property type="entry name" value="TRANSLATION FACTOR GUF1-RELATED"/>
    <property type="match status" value="1"/>
</dbReference>
<dbReference type="Pfam" id="PF00679">
    <property type="entry name" value="EFG_C"/>
    <property type="match status" value="1"/>
</dbReference>
<dbReference type="Pfam" id="PF00009">
    <property type="entry name" value="GTP_EFTU"/>
    <property type="match status" value="1"/>
</dbReference>
<dbReference type="Pfam" id="PF03144">
    <property type="entry name" value="GTP_EFTU_D2"/>
    <property type="match status" value="1"/>
</dbReference>
<dbReference type="Pfam" id="PF06421">
    <property type="entry name" value="LepA_C"/>
    <property type="match status" value="1"/>
</dbReference>
<dbReference type="PRINTS" id="PR00315">
    <property type="entry name" value="ELONGATNFCT"/>
</dbReference>
<dbReference type="SUPFAM" id="SSF54980">
    <property type="entry name" value="EF-G C-terminal domain-like"/>
    <property type="match status" value="2"/>
</dbReference>
<dbReference type="SUPFAM" id="SSF52540">
    <property type="entry name" value="P-loop containing nucleoside triphosphate hydrolases"/>
    <property type="match status" value="1"/>
</dbReference>
<dbReference type="PROSITE" id="PS00301">
    <property type="entry name" value="G_TR_1"/>
    <property type="match status" value="1"/>
</dbReference>
<dbReference type="PROSITE" id="PS51722">
    <property type="entry name" value="G_TR_2"/>
    <property type="match status" value="1"/>
</dbReference>
<proteinExistence type="inferred from homology"/>
<gene>
    <name evidence="1" type="primary">lepA</name>
    <name type="ordered locus">BUAPTUC7_257</name>
</gene>
<comment type="function">
    <text evidence="1">Required for accurate and efficient protein synthesis under certain stress conditions. May act as a fidelity factor of the translation reaction, by catalyzing a one-codon backward translocation of tRNAs on improperly translocated ribosomes. Back-translocation proceeds from a post-translocation (POST) complex to a pre-translocation (PRE) complex, thus giving elongation factor G a second chance to translocate the tRNAs correctly. Binds to ribosomes in a GTP-dependent manner.</text>
</comment>
<comment type="catalytic activity">
    <reaction evidence="1">
        <text>GTP + H2O = GDP + phosphate + H(+)</text>
        <dbReference type="Rhea" id="RHEA:19669"/>
        <dbReference type="ChEBI" id="CHEBI:15377"/>
        <dbReference type="ChEBI" id="CHEBI:15378"/>
        <dbReference type="ChEBI" id="CHEBI:37565"/>
        <dbReference type="ChEBI" id="CHEBI:43474"/>
        <dbReference type="ChEBI" id="CHEBI:58189"/>
        <dbReference type="EC" id="3.6.5.n1"/>
    </reaction>
</comment>
<comment type="subcellular location">
    <subcellularLocation>
        <location evidence="1">Cell membrane</location>
        <topology evidence="1">Peripheral membrane protein</topology>
        <orientation evidence="1">Cytoplasmic side</orientation>
    </subcellularLocation>
</comment>
<comment type="similarity">
    <text evidence="1">Belongs to the TRAFAC class translation factor GTPase superfamily. Classic translation factor GTPase family. LepA subfamily.</text>
</comment>
<evidence type="ECO:0000255" key="1">
    <source>
        <dbReference type="HAMAP-Rule" id="MF_00071"/>
    </source>
</evidence>
<accession>B8D7F7</accession>
<sequence>MLKCIKHEYGIKNMKSIRNFSIIAHIDHGKSTLSDRLIQLCGGLSEREMSNQVLDSMDLEKERGITIKAQSVMIDYKNKSGNIFNLNFIDTPGHVDFSYEVSRSLAACEGALLVVDSTQGVEAQTLANCYTAIDMNVEIVPVLNKIDLPNSNADKVAKEIEDIIGIPALDAIRCSAKTGEGIEDLIERIINDIPYPKGSINSPLQALIIDSWFDNYLGVVSLIRIKNGILFEKDKIQVMSTGKNYYVDQIGVFTPKKLNKNQLRCGEVGWIICGIKNIIAAPVGDTLTTAKNPAKNMIIGFKKIKPQIYAGLFPLTSDQYEMFRDALGKLSLNDASLFYEPENSVALGFGFRCGFLGVLHMEIIQARLEREYSIDLITTIPTVIYEIELINGKIIYLDTPSNFPNMNDIKIIKEPIVECSILSPPQFLGSIIKLCIKKRGVQINMVYHSHQVLLKYNIPMNEVILNFFDELKSVSSGYASLEYDFKYFQSVKMVRIDILINSEKVDALTILSYHKNAQSRSREIVDKMKKLIPRHQFDISIQAVINNSVIARSTIKQLRKNVLSKCYGGDVSRKKKLLQKQKDGKKRMKKIGNVNVPKTVFLSILNSRES</sequence>
<name>LEPA_BUCAT</name>
<feature type="chain" id="PRO_1000118041" description="Elongation factor 4">
    <location>
        <begin position="1"/>
        <end position="610"/>
    </location>
</feature>
<feature type="domain" description="tr-type G">
    <location>
        <begin position="15"/>
        <end position="197"/>
    </location>
</feature>
<feature type="binding site" evidence="1">
    <location>
        <begin position="27"/>
        <end position="32"/>
    </location>
    <ligand>
        <name>GTP</name>
        <dbReference type="ChEBI" id="CHEBI:37565"/>
    </ligand>
</feature>
<feature type="binding site" evidence="1">
    <location>
        <begin position="144"/>
        <end position="147"/>
    </location>
    <ligand>
        <name>GTP</name>
        <dbReference type="ChEBI" id="CHEBI:37565"/>
    </ligand>
</feature>
<reference key="1">
    <citation type="journal article" date="2009" name="Science">
        <title>The dynamics and time scale of ongoing genomic erosion in symbiotic bacteria.</title>
        <authorList>
            <person name="Moran N.A."/>
            <person name="McLaughlin H.J."/>
            <person name="Sorek R."/>
        </authorList>
    </citation>
    <scope>NUCLEOTIDE SEQUENCE [LARGE SCALE GENOMIC DNA]</scope>
    <source>
        <strain>Tuc7</strain>
    </source>
</reference>
<keyword id="KW-1003">Cell membrane</keyword>
<keyword id="KW-0342">GTP-binding</keyword>
<keyword id="KW-0378">Hydrolase</keyword>
<keyword id="KW-0472">Membrane</keyword>
<keyword id="KW-0547">Nucleotide-binding</keyword>
<keyword id="KW-0648">Protein biosynthesis</keyword>
<protein>
    <recommendedName>
        <fullName evidence="1">Elongation factor 4</fullName>
        <shortName evidence="1">EF-4</shortName>
        <ecNumber evidence="1">3.6.5.n1</ecNumber>
    </recommendedName>
    <alternativeName>
        <fullName evidence="1">Ribosomal back-translocase LepA</fullName>
    </alternativeName>
</protein>
<organism>
    <name type="scientific">Buchnera aphidicola subsp. Acyrthosiphon pisum (strain Tuc7)</name>
    <dbReference type="NCBI Taxonomy" id="561501"/>
    <lineage>
        <taxon>Bacteria</taxon>
        <taxon>Pseudomonadati</taxon>
        <taxon>Pseudomonadota</taxon>
        <taxon>Gammaproteobacteria</taxon>
        <taxon>Enterobacterales</taxon>
        <taxon>Erwiniaceae</taxon>
        <taxon>Buchnera</taxon>
    </lineage>
</organism>